<feature type="signal peptide" evidence="6 7">
    <location>
        <begin position="1"/>
        <end position="28"/>
    </location>
</feature>
<feature type="chain" id="PRO_0000421144" description="Cannabidiolic acid synthase">
    <location>
        <begin position="29"/>
        <end position="544"/>
    </location>
</feature>
<feature type="domain" description="FAD-binding PCMH-type" evidence="5">
    <location>
        <begin position="77"/>
        <end position="251"/>
    </location>
</feature>
<feature type="active site" description="Proton acceptor" evidence="3">
    <location>
        <position position="483"/>
    </location>
</feature>
<feature type="binding site" evidence="3">
    <location>
        <begin position="109"/>
        <end position="115"/>
    </location>
    <ligand>
        <name>FAD</name>
        <dbReference type="ChEBI" id="CHEBI:57692"/>
    </ligand>
</feature>
<feature type="binding site" evidence="3">
    <location>
        <position position="120"/>
    </location>
    <ligand>
        <name>FAD</name>
        <dbReference type="ChEBI" id="CHEBI:57692"/>
    </ligand>
</feature>
<feature type="binding site" evidence="3">
    <location>
        <position position="176"/>
    </location>
    <ligand>
        <name>FAD</name>
        <dbReference type="ChEBI" id="CHEBI:57692"/>
    </ligand>
</feature>
<feature type="binding site" evidence="3">
    <location>
        <begin position="180"/>
        <end position="184"/>
    </location>
    <ligand>
        <name>FAD</name>
        <dbReference type="ChEBI" id="CHEBI:57692"/>
    </ligand>
</feature>
<feature type="binding site" evidence="3">
    <location>
        <position position="190"/>
    </location>
    <ligand>
        <name>FAD</name>
        <dbReference type="ChEBI" id="CHEBI:57692"/>
    </ligand>
</feature>
<feature type="binding site" evidence="3">
    <location>
        <position position="236"/>
    </location>
    <ligand>
        <name>FAD</name>
        <dbReference type="ChEBI" id="CHEBI:57692"/>
    </ligand>
</feature>
<feature type="binding site" evidence="3">
    <location>
        <position position="241"/>
    </location>
    <ligand>
        <name>FAD</name>
        <dbReference type="ChEBI" id="CHEBI:57692"/>
    </ligand>
</feature>
<feature type="binding site" evidence="3">
    <location>
        <position position="291"/>
    </location>
    <ligand>
        <name>cannabigerolate</name>
        <dbReference type="ChEBI" id="CHEBI:66962"/>
    </ligand>
</feature>
<feature type="binding site" evidence="3">
    <location>
        <position position="416"/>
    </location>
    <ligand>
        <name>cannabigerolate</name>
        <dbReference type="ChEBI" id="CHEBI:66962"/>
    </ligand>
</feature>
<feature type="binding site" evidence="2">
    <location>
        <position position="441"/>
    </location>
    <ligand>
        <name>cannabigerolate</name>
        <dbReference type="ChEBI" id="CHEBI:66962"/>
    </ligand>
</feature>
<feature type="binding site" evidence="3">
    <location>
        <begin position="480"/>
        <end position="482"/>
    </location>
    <ligand>
        <name>FAD</name>
        <dbReference type="ChEBI" id="CHEBI:57692"/>
    </ligand>
</feature>
<feature type="glycosylation site" description="N-linked (GlcNAc...) asparagine" evidence="4">
    <location>
        <position position="45"/>
    </location>
</feature>
<feature type="glycosylation site" description="N-linked (GlcNAc...) asparagine" evidence="4">
    <location>
        <position position="65"/>
    </location>
</feature>
<feature type="glycosylation site" description="N-linked (GlcNAc...) asparagine" evidence="4">
    <location>
        <position position="168"/>
    </location>
</feature>
<feature type="glycosylation site" description="N-linked (GlcNAc...) asparagine" evidence="4">
    <location>
        <position position="296"/>
    </location>
</feature>
<feature type="glycosylation site" description="N-linked (GlcNAc...) asparagine" evidence="4">
    <location>
        <position position="304"/>
    </location>
</feature>
<feature type="glycosylation site" description="N-linked (GlcNAc...) asparagine" evidence="4">
    <location>
        <position position="328"/>
    </location>
</feature>
<feature type="glycosylation site" description="N-linked (GlcNAc...) asparagine" evidence="4">
    <location>
        <position position="498"/>
    </location>
</feature>
<feature type="disulfide bond" evidence="3">
    <location>
        <begin position="37"/>
        <end position="99"/>
    </location>
</feature>
<feature type="cross-link" description="6-(S-cysteinyl)-8alpha-(pros-histidyl)-FAD (His-Cys)" evidence="3">
    <location>
        <begin position="114"/>
        <end position="176"/>
    </location>
</feature>
<feature type="mutagenesis site" description="Loss of FAD binding and loss of catalytic activity." evidence="6">
    <original>H</original>
    <variation>A</variation>
    <location>
        <position position="114"/>
    </location>
</feature>
<name>CBDAS_CANSA</name>
<evidence type="ECO:0000250" key="1"/>
<evidence type="ECO:0000250" key="2">
    <source>
        <dbReference type="UniProtKB" id="G2QG48"/>
    </source>
</evidence>
<evidence type="ECO:0000250" key="3">
    <source>
        <dbReference type="UniProtKB" id="Q8GTB6"/>
    </source>
</evidence>
<evidence type="ECO:0000255" key="4">
    <source>
        <dbReference type="PROSITE-ProRule" id="PRU00498"/>
    </source>
</evidence>
<evidence type="ECO:0000255" key="5">
    <source>
        <dbReference type="PROSITE-ProRule" id="PRU00718"/>
    </source>
</evidence>
<evidence type="ECO:0000269" key="6">
    <source>
    </source>
</evidence>
<evidence type="ECO:0000269" key="7">
    <source>
    </source>
</evidence>
<evidence type="ECO:0000303" key="8">
    <source>
    </source>
</evidence>
<evidence type="ECO:0000303" key="9">
    <source>
    </source>
</evidence>
<evidence type="ECO:0000305" key="10"/>
<keyword id="KW-0052">Apoplast</keyword>
<keyword id="KW-0903">Direct protein sequencing</keyword>
<keyword id="KW-1015">Disulfide bond</keyword>
<keyword id="KW-0274">FAD</keyword>
<keyword id="KW-0285">Flavoprotein</keyword>
<keyword id="KW-0325">Glycoprotein</keyword>
<keyword id="KW-0560">Oxidoreductase</keyword>
<keyword id="KW-0964">Secreted</keyword>
<keyword id="KW-0732">Signal</keyword>
<dbReference type="EC" id="1.21.3.8" evidence="6 7"/>
<dbReference type="EMBL" id="AB292682">
    <property type="protein sequence ID" value="BAF65033.1"/>
    <property type="molecule type" value="mRNA"/>
</dbReference>
<dbReference type="SMR" id="A6P6V9"/>
<dbReference type="GlyCosmos" id="A6P6V9">
    <property type="glycosylation" value="7 sites, No reported glycans"/>
</dbReference>
<dbReference type="KEGG" id="ag:BAF65033"/>
<dbReference type="OrthoDB" id="407275at2759"/>
<dbReference type="BioCyc" id="MetaCyc:MONOMER-12034"/>
<dbReference type="BRENDA" id="1.21.3.8">
    <property type="organism ID" value="1159"/>
</dbReference>
<dbReference type="UniPathway" id="UPA00213"/>
<dbReference type="Proteomes" id="UP000596661">
    <property type="component" value="Unplaced"/>
</dbReference>
<dbReference type="GO" id="GO:0048046">
    <property type="term" value="C:apoplast"/>
    <property type="evidence" value="ECO:0007669"/>
    <property type="project" value="UniProtKB-SubCell"/>
</dbReference>
<dbReference type="GO" id="GO:0102779">
    <property type="term" value="F:cannabidiolate synthase activity"/>
    <property type="evidence" value="ECO:0007669"/>
    <property type="project" value="UniProtKB-EC"/>
</dbReference>
<dbReference type="GO" id="GO:0071949">
    <property type="term" value="F:FAD binding"/>
    <property type="evidence" value="ECO:0007669"/>
    <property type="project" value="InterPro"/>
</dbReference>
<dbReference type="GO" id="GO:1901696">
    <property type="term" value="P:cannabinoid biosynthetic process"/>
    <property type="evidence" value="ECO:0000304"/>
    <property type="project" value="UniProtKB"/>
</dbReference>
<dbReference type="GO" id="GO:0016114">
    <property type="term" value="P:terpenoid biosynthetic process"/>
    <property type="evidence" value="ECO:0007669"/>
    <property type="project" value="UniProtKB-UniPathway"/>
</dbReference>
<dbReference type="FunFam" id="3.30.43.10:FF:000004">
    <property type="entry name" value="Berberine bridge enzyme-like 15"/>
    <property type="match status" value="1"/>
</dbReference>
<dbReference type="Gene3D" id="3.30.465.10">
    <property type="match status" value="1"/>
</dbReference>
<dbReference type="Gene3D" id="3.40.462.20">
    <property type="match status" value="1"/>
</dbReference>
<dbReference type="Gene3D" id="3.30.43.10">
    <property type="entry name" value="Uridine Diphospho-n-acetylenolpyruvylglucosamine Reductase, domain 2"/>
    <property type="match status" value="1"/>
</dbReference>
<dbReference type="InterPro" id="IPR012951">
    <property type="entry name" value="BBE"/>
</dbReference>
<dbReference type="InterPro" id="IPR016166">
    <property type="entry name" value="FAD-bd_PCMH"/>
</dbReference>
<dbReference type="InterPro" id="IPR036318">
    <property type="entry name" value="FAD-bd_PCMH-like_sf"/>
</dbReference>
<dbReference type="InterPro" id="IPR016167">
    <property type="entry name" value="FAD-bd_PCMH_sub1"/>
</dbReference>
<dbReference type="InterPro" id="IPR016169">
    <property type="entry name" value="FAD-bd_PCMH_sub2"/>
</dbReference>
<dbReference type="InterPro" id="IPR006094">
    <property type="entry name" value="Oxid_FAD_bind_N"/>
</dbReference>
<dbReference type="PANTHER" id="PTHR32448">
    <property type="entry name" value="OS08G0158400 PROTEIN"/>
    <property type="match status" value="1"/>
</dbReference>
<dbReference type="Pfam" id="PF08031">
    <property type="entry name" value="BBE"/>
    <property type="match status" value="1"/>
</dbReference>
<dbReference type="Pfam" id="PF01565">
    <property type="entry name" value="FAD_binding_4"/>
    <property type="match status" value="1"/>
</dbReference>
<dbReference type="SUPFAM" id="SSF56176">
    <property type="entry name" value="FAD-binding/transporter-associated domain-like"/>
    <property type="match status" value="1"/>
</dbReference>
<dbReference type="PROSITE" id="PS51387">
    <property type="entry name" value="FAD_PCMH"/>
    <property type="match status" value="1"/>
</dbReference>
<comment type="function">
    <text evidence="6 7">Oxidoreductase involved in the biosynthesis of cannabinoids-related terpenophenolic natural products, which have pharmacological activity (PubMed:17544411, PubMed:8663284). Catalyzes the stereoselective oxidative cyclization of the monoterpene moiety in cannabigerolic acid (CBGA), producing cannabidiolate (CBDA), the major cannabioid in fiber-type Cannabis plants (PubMed:17544411, PubMed:8663284). Can also use cannabinerolic acid as substrate, but not cannabigerol or cannabinerol (PubMed:17544411, PubMed:8663284).</text>
</comment>
<comment type="catalytic activity">
    <reaction evidence="6 7">
        <text>cannabigerolate + O2 = cannabidiolate + H2O2</text>
        <dbReference type="Rhea" id="RHEA:34411"/>
        <dbReference type="ChEBI" id="CHEBI:15379"/>
        <dbReference type="ChEBI" id="CHEBI:16240"/>
        <dbReference type="ChEBI" id="CHEBI:66962"/>
        <dbReference type="ChEBI" id="CHEBI:67136"/>
        <dbReference type="EC" id="1.21.3.8"/>
    </reaction>
    <physiologicalReaction direction="left-to-right" evidence="6 7">
        <dbReference type="Rhea" id="RHEA:34412"/>
    </physiologicalReaction>
</comment>
<comment type="cofactor">
    <cofactor evidence="3">
        <name>FAD</name>
        <dbReference type="ChEBI" id="CHEBI:57692"/>
    </cofactor>
    <text evidence="3">Binds 1 FAD per subunit in a bicovalent manner.</text>
</comment>
<comment type="activity regulation">
    <text evidence="7">Inhibited by Hg(2+).</text>
</comment>
<comment type="biophysicochemical properties">
    <kinetics>
        <KM evidence="7">0.137 mM for cannabigerolic acid</KM>
        <KM evidence="7">0.206 mM for cannabinerolic acid</KM>
        <Vmax evidence="7">2.57 nmol/sec/mg enzyme with cannabigerolic acid as substrate</Vmax>
        <Vmax evidence="7">0.39 nmol/sec/mg enzyme with cannabinerolic acid as substrate</Vmax>
    </kinetics>
    <phDependence>
        <text evidence="7">Optimum pH is 5.0.</text>
    </phDependence>
</comment>
<comment type="pathway">
    <text evidence="8">Secondary metabolite biosynthesis; terpenoid biosynthesis.</text>
</comment>
<comment type="subunit">
    <text evidence="7">Monomer.</text>
</comment>
<comment type="subcellular location">
    <subcellularLocation>
        <location evidence="7">Secreted</location>
    </subcellularLocation>
    <subcellularLocation>
        <location evidence="1">Secreted</location>
        <location evidence="1">Extracellular space</location>
        <location evidence="1">Apoplast</location>
    </subcellularLocation>
    <text>Probably sorted from the secretory cells into the storage cavity of glandular trichomes.</text>
</comment>
<comment type="tissue specificity">
    <text evidence="7">Expressed in young leaves.</text>
</comment>
<comment type="PTM">
    <text evidence="6">Glycosylated.</text>
</comment>
<comment type="PTM">
    <text evidence="3">The FAD cofactor is bound via a bicovalent 6-S-cysteinyl, 8alpha-N1-histidyl FAD linkage.</text>
</comment>
<comment type="miscellaneous">
    <text evidence="1">CBDA synthase might contribute to the self-defense of Cannabis plants by producing both CBDA and hydrogen peroxide, but since these reaction products are toxic to the plant itself, CBDA synthase is probably secreted from secretory cells into the storage cavity to avoid cellular damage.</text>
</comment>
<comment type="similarity">
    <text evidence="10">Belongs to the oxygen-dependent FAD-linked oxidoreductase family.</text>
</comment>
<organism>
    <name type="scientific">Cannabis sativa</name>
    <name type="common">Hemp</name>
    <name type="synonym">Marijuana</name>
    <dbReference type="NCBI Taxonomy" id="3483"/>
    <lineage>
        <taxon>Eukaryota</taxon>
        <taxon>Viridiplantae</taxon>
        <taxon>Streptophyta</taxon>
        <taxon>Embryophyta</taxon>
        <taxon>Tracheophyta</taxon>
        <taxon>Spermatophyta</taxon>
        <taxon>Magnoliopsida</taxon>
        <taxon>eudicotyledons</taxon>
        <taxon>Gunneridae</taxon>
        <taxon>Pentapetalae</taxon>
        <taxon>rosids</taxon>
        <taxon>fabids</taxon>
        <taxon>Rosales</taxon>
        <taxon>Cannabaceae</taxon>
        <taxon>Cannabis</taxon>
    </lineage>
</organism>
<accession>A6P6V9</accession>
<proteinExistence type="evidence at protein level"/>
<gene>
    <name evidence="9" type="primary">CBDAS</name>
</gene>
<sequence>MKCSTFSFWFVCKIIFFFFSFNIQTSIANPRENFLKCFSQYIPNNATNLKLVYTQNNPLYMSVLNSTIHNLRFTSDTTPKPLVIVTPSHVSHIQGTILCSKKVGLQIRTRSGGHDSEGMSYISQVPFVIVDLRNMRSIKIDVHSQTAWVEAGATLGEVYYWVNEKNENLSLAAGYCPTVCAGGHFGGGGYGPLMRNYGLAADNIIDAHLVNVHGKVLDRKSMGEDLFWALRGGGAESFGIIVAWKIRLVAVPKSTMFSVKKIMEIHELVKLVNKWQNIAYKYDKDLLLMTHFITRNITDNQGKNKTAIHTYFSSVFLGGVDSLVDLMNKSFPELGIKKTDCRQLSWIDTIIFYSGVVNYDTDNFNKEILLDRSAGQNGAFKIKLDYVKKPIPESVFVQILEKLYEEDIGAGMYALYPYGGIMDEISESAIPFPHRAGILYELWYICSWEKQEDNEKHLNWIRNIYNFMTPYVSKNPRLAYLNYRDLDIGINDPKNPNNYTQARIWGEKYFGKNFDRLVKVKTLVDPNNFFRNEQSIPPLPRHRH</sequence>
<reference key="1">
    <citation type="journal article" date="2007" name="FEBS Lett.">
        <title>Cannabidiolic-acid synthase, the chemotype-determining enzyme in the fiber-type Cannabis sativa.</title>
        <authorList>
            <person name="Taura F."/>
            <person name="Sirikantaramas S."/>
            <person name="Shoyama Y."/>
            <person name="Yoshikai K."/>
            <person name="Shoyama Y."/>
            <person name="Morimoto S."/>
        </authorList>
    </citation>
    <scope>NUCLEOTIDE SEQUENCE [MRNA]</scope>
    <scope>PROTEIN SEQUENCE OF 29-53; 395-408 AND 428-442</scope>
    <scope>FUNCTION</scope>
    <scope>CATALYTIC ACTIVITY</scope>
    <scope>GLYCOSYLATION</scope>
    <scope>MUTAGENESIS OF HIS-114</scope>
</reference>
<reference key="2">
    <citation type="journal article" date="1996" name="J. Biol. Chem.">
        <title>Purification and characterization of cannabidiolic-acid synthase from Cannabis sativa L. Biochemical analysis of a novel enzyme that catalyzes the oxidocyclization of cannabigerolic acid to cannabidiolic acid.</title>
        <authorList>
            <person name="Taura F."/>
            <person name="Morimoto S."/>
            <person name="Shoyama Y."/>
        </authorList>
    </citation>
    <scope>PROTEIN SEQUENCE OF 29-44</scope>
    <scope>FUNCTION</scope>
    <scope>CATALYTIC ACTIVITY</scope>
    <scope>BIOPHYSICOCHEMICAL PROPERTIES</scope>
    <scope>ACTIVITY REGULATION</scope>
    <scope>SUBUNIT</scope>
    <scope>SUBSTRATE SPECIFICITY</scope>
    <scope>TISSUE SPECIFICITY</scope>
    <scope>SUBCELLULAR LOCATION</scope>
</reference>
<reference key="3">
    <citation type="journal article" date="2007" name="Chem. Biodivers.">
        <title>Phytocannabinoids in Cannabis sativa: recent studies on biosynthetic enzymes.</title>
        <authorList>
            <person name="Taura F."/>
            <person name="Sirikantaramas S."/>
            <person name="Shoyama Y."/>
            <person name="Shoyama Y."/>
            <person name="Morimoto S."/>
        </authorList>
    </citation>
    <scope>REVIEW</scope>
</reference>
<reference key="4">
    <citation type="journal article" date="2019" name="Nat. Prod. Rep.">
        <title>Non-volatile natural products in plant glandular trichomes: chemistry, biological activities and biosynthesis.</title>
        <authorList>
            <person name="Liu Y."/>
            <person name="Jing S.-X."/>
            <person name="Luo S.-H."/>
            <person name="Li S.-H."/>
        </authorList>
    </citation>
    <scope>PATHWAY</scope>
    <scope>REVIEW</scope>
</reference>
<protein>
    <recommendedName>
        <fullName evidence="9">Cannabidiolic acid synthase</fullName>
        <shortName evidence="9">CBDA synthase</shortName>
        <ecNumber evidence="6 7">1.21.3.8</ecNumber>
    </recommendedName>
</protein>